<proteinExistence type="inferred from homology"/>
<feature type="chain" id="PRO_1000114536" description="Glycine cleavage system H protein">
    <location>
        <begin position="1"/>
        <end position="149"/>
    </location>
</feature>
<feature type="domain" description="Lipoyl-binding" evidence="2">
    <location>
        <begin position="23"/>
        <end position="104"/>
    </location>
</feature>
<feature type="modified residue" description="N6-lipoyllysine" evidence="1">
    <location>
        <position position="64"/>
    </location>
</feature>
<accession>B1XSD8</accession>
<protein>
    <recommendedName>
        <fullName evidence="1">Glycine cleavage system H protein</fullName>
    </recommendedName>
</protein>
<reference key="1">
    <citation type="journal article" date="2013" name="Proc. Natl. Acad. Sci. U.S.A.">
        <title>Polynucleobacter necessarius, a model for genome reduction in both free-living and symbiotic bacteria.</title>
        <authorList>
            <person name="Boscaro V."/>
            <person name="Felletti M."/>
            <person name="Vannini C."/>
            <person name="Ackerman M.S."/>
            <person name="Chain P.S."/>
            <person name="Malfatti S."/>
            <person name="Vergez L.M."/>
            <person name="Shin M."/>
            <person name="Doak T.G."/>
            <person name="Lynch M."/>
            <person name="Petroni G."/>
        </authorList>
    </citation>
    <scope>NUCLEOTIDE SEQUENCE [LARGE SCALE GENOMIC DNA]</scope>
    <source>
        <strain>STIR1</strain>
    </source>
</reference>
<dbReference type="EMBL" id="CP001010">
    <property type="protein sequence ID" value="ACB43356.1"/>
    <property type="molecule type" value="Genomic_DNA"/>
</dbReference>
<dbReference type="SMR" id="B1XSD8"/>
<dbReference type="STRING" id="452638.Pnec_0026"/>
<dbReference type="KEGG" id="pne:Pnec_0026"/>
<dbReference type="eggNOG" id="COG0509">
    <property type="taxonomic scope" value="Bacteria"/>
</dbReference>
<dbReference type="HOGENOM" id="CLU_1747972_0_0_4"/>
<dbReference type="OrthoDB" id="9796712at2"/>
<dbReference type="GO" id="GO:0005829">
    <property type="term" value="C:cytosol"/>
    <property type="evidence" value="ECO:0007669"/>
    <property type="project" value="TreeGrafter"/>
</dbReference>
<dbReference type="GO" id="GO:0005960">
    <property type="term" value="C:glycine cleavage complex"/>
    <property type="evidence" value="ECO:0007669"/>
    <property type="project" value="InterPro"/>
</dbReference>
<dbReference type="GO" id="GO:0019464">
    <property type="term" value="P:glycine decarboxylation via glycine cleavage system"/>
    <property type="evidence" value="ECO:0007669"/>
    <property type="project" value="UniProtKB-UniRule"/>
</dbReference>
<dbReference type="CDD" id="cd06848">
    <property type="entry name" value="GCS_H"/>
    <property type="match status" value="1"/>
</dbReference>
<dbReference type="Gene3D" id="2.40.50.100">
    <property type="match status" value="1"/>
</dbReference>
<dbReference type="HAMAP" id="MF_00272">
    <property type="entry name" value="GcvH"/>
    <property type="match status" value="1"/>
</dbReference>
<dbReference type="InterPro" id="IPR003016">
    <property type="entry name" value="2-oxoA_DH_lipoyl-BS"/>
</dbReference>
<dbReference type="InterPro" id="IPR000089">
    <property type="entry name" value="Biotin_lipoyl"/>
</dbReference>
<dbReference type="InterPro" id="IPR002930">
    <property type="entry name" value="GCV_H"/>
</dbReference>
<dbReference type="InterPro" id="IPR033753">
    <property type="entry name" value="GCV_H/Fam206"/>
</dbReference>
<dbReference type="InterPro" id="IPR011053">
    <property type="entry name" value="Single_hybrid_motif"/>
</dbReference>
<dbReference type="NCBIfam" id="NF002270">
    <property type="entry name" value="PRK01202.1"/>
    <property type="match status" value="1"/>
</dbReference>
<dbReference type="PANTHER" id="PTHR11715">
    <property type="entry name" value="GLYCINE CLEAVAGE SYSTEM H PROTEIN"/>
    <property type="match status" value="1"/>
</dbReference>
<dbReference type="PANTHER" id="PTHR11715:SF3">
    <property type="entry name" value="GLYCINE CLEAVAGE SYSTEM H PROTEIN-RELATED"/>
    <property type="match status" value="1"/>
</dbReference>
<dbReference type="Pfam" id="PF01597">
    <property type="entry name" value="GCV_H"/>
    <property type="match status" value="1"/>
</dbReference>
<dbReference type="SUPFAM" id="SSF51230">
    <property type="entry name" value="Single hybrid motif"/>
    <property type="match status" value="1"/>
</dbReference>
<dbReference type="PROSITE" id="PS50968">
    <property type="entry name" value="BIOTINYL_LIPOYL"/>
    <property type="match status" value="1"/>
</dbReference>
<dbReference type="PROSITE" id="PS00189">
    <property type="entry name" value="LIPOYL"/>
    <property type="match status" value="1"/>
</dbReference>
<organism>
    <name type="scientific">Polynucleobacter necessarius subsp. necessarius (strain STIR1)</name>
    <dbReference type="NCBI Taxonomy" id="452638"/>
    <lineage>
        <taxon>Bacteria</taxon>
        <taxon>Pseudomonadati</taxon>
        <taxon>Pseudomonadota</taxon>
        <taxon>Betaproteobacteria</taxon>
        <taxon>Burkholderiales</taxon>
        <taxon>Burkholderiaceae</taxon>
        <taxon>Polynucleobacter</taxon>
    </lineage>
</organism>
<comment type="function">
    <text evidence="1">The glycine cleavage system catalyzes the degradation of glycine. The H protein shuttles the methylamine group of glycine from the P protein to the T protein.</text>
</comment>
<comment type="cofactor">
    <cofactor evidence="1">
        <name>(R)-lipoate</name>
        <dbReference type="ChEBI" id="CHEBI:83088"/>
    </cofactor>
    <text evidence="1">Binds 1 lipoyl cofactor covalently.</text>
</comment>
<comment type="subunit">
    <text evidence="1">The glycine cleavage system is composed of four proteins: P, T, L and H.</text>
</comment>
<comment type="similarity">
    <text evidence="1">Belongs to the GcvH family.</text>
</comment>
<evidence type="ECO:0000255" key="1">
    <source>
        <dbReference type="HAMAP-Rule" id="MF_00272"/>
    </source>
</evidence>
<evidence type="ECO:0000255" key="2">
    <source>
        <dbReference type="PROSITE-ProRule" id="PRU01066"/>
    </source>
</evidence>
<sequence>MNSQDTFKFAETHEWADQEDDGLIWVGISNHAQEALGDVMFFQAPKLDQQVKQGEAIAVIESVKAASDIHAPVSGEIVALNEEVDASPELVNEEPYGIWLFKINRPLMRFLYPTRCALEFRKILCRPWRLIIKLKWGRAQLTSECGLLC</sequence>
<gene>
    <name evidence="1" type="primary">gcvH</name>
    <name type="ordered locus">Pnec_0026</name>
</gene>
<keyword id="KW-0450">Lipoyl</keyword>
<name>GCSH_POLNS</name>